<accession>P0DKP6</accession>
<dbReference type="GO" id="GO:0005576">
    <property type="term" value="C:extracellular region"/>
    <property type="evidence" value="ECO:0007669"/>
    <property type="project" value="UniProtKB-SubCell"/>
</dbReference>
<dbReference type="GO" id="GO:0030550">
    <property type="term" value="F:acetylcholine receptor inhibitor activity"/>
    <property type="evidence" value="ECO:0007669"/>
    <property type="project" value="InterPro"/>
</dbReference>
<dbReference type="GO" id="GO:0090729">
    <property type="term" value="F:toxin activity"/>
    <property type="evidence" value="ECO:0007669"/>
    <property type="project" value="UniProtKB-KW"/>
</dbReference>
<dbReference type="InterPro" id="IPR009958">
    <property type="entry name" value="Conotoxin_a-typ"/>
</dbReference>
<dbReference type="InterPro" id="IPR018072">
    <property type="entry name" value="Conotoxin_a-typ_CS"/>
</dbReference>
<dbReference type="Pfam" id="PF07365">
    <property type="entry name" value="Toxin_8"/>
    <property type="match status" value="1"/>
</dbReference>
<dbReference type="PROSITE" id="PS60014">
    <property type="entry name" value="ALPHA_CONOTOXIN"/>
    <property type="match status" value="1"/>
</dbReference>
<reference key="1">
    <citation type="journal article" date="2012" name="J. Proteomics">
        <title>Large-scale discovery of conopeptides and conoproteins in the injectable venom of a fish-hunting cone snail using a combined proteomic and transcriptomic approach.</title>
        <authorList>
            <person name="Violette A."/>
            <person name="Biass D."/>
            <person name="Dutertre S."/>
            <person name="Koua D."/>
            <person name="Piquemal D."/>
            <person name="Pierrat F."/>
            <person name="Stocklin R."/>
            <person name="Favreau P."/>
        </authorList>
    </citation>
    <scope>NUCLEOTIDE SEQUENCE [MRNA]</scope>
    <scope>AMIDATION AT CYS-62</scope>
    <scope>MASS SPECTROMETRY</scope>
    <scope>IDENTIFICATION BY MASS SPECTROMETRY</scope>
    <scope>SUBCELLULAR LOCATION</scope>
    <source>
        <tissue>Venom</tissue>
        <tissue>Venom duct</tissue>
    </source>
</reference>
<feature type="signal peptide" evidence="2">
    <location>
        <begin position="1"/>
        <end position="21"/>
    </location>
</feature>
<feature type="propeptide" id="PRO_0000419869" evidence="5">
    <location>
        <begin position="22"/>
        <end position="49"/>
    </location>
</feature>
<feature type="peptide" id="PRO_0000419870" description="Alpha-conotoxin CnIL" evidence="3">
    <location>
        <begin position="51"/>
        <end position="62"/>
    </location>
</feature>
<feature type="modified residue" description="Cysteine amide" evidence="3">
    <location>
        <position position="62"/>
    </location>
</feature>
<feature type="disulfide bond" evidence="1">
    <location>
        <begin position="51"/>
        <end position="56"/>
    </location>
</feature>
<feature type="disulfide bond" evidence="1">
    <location>
        <begin position="52"/>
        <end position="62"/>
    </location>
</feature>
<organism>
    <name type="scientific">Conus consors</name>
    <name type="common">Singed cone</name>
    <dbReference type="NCBI Taxonomy" id="101297"/>
    <lineage>
        <taxon>Eukaryota</taxon>
        <taxon>Metazoa</taxon>
        <taxon>Spiralia</taxon>
        <taxon>Lophotrochozoa</taxon>
        <taxon>Mollusca</taxon>
        <taxon>Gastropoda</taxon>
        <taxon>Caenogastropoda</taxon>
        <taxon>Neogastropoda</taxon>
        <taxon>Conoidea</taxon>
        <taxon>Conidae</taxon>
        <taxon>Conus</taxon>
        <taxon>Pionoconus</taxon>
    </lineage>
</organism>
<sequence length="64" mass="7193">MGMRMMFTVFLLVVLTTTVVSFPSDSASDGRDDEAKDERSDIYESKRDGRCCHPACGKYYSCGR</sequence>
<name>CA1L_CONCN</name>
<keyword id="KW-0027">Amidation</keyword>
<keyword id="KW-1015">Disulfide bond</keyword>
<keyword id="KW-0964">Secreted</keyword>
<keyword id="KW-0732">Signal</keyword>
<keyword id="KW-0800">Toxin</keyword>
<proteinExistence type="evidence at protein level"/>
<comment type="subcellular location">
    <subcellularLocation>
        <location evidence="3">Secreted</location>
    </subcellularLocation>
</comment>
<comment type="tissue specificity">
    <text evidence="5">Expressed by the venom duct.</text>
</comment>
<comment type="domain">
    <text evidence="4">The cysteine framework is I (CC-C-C). Alpha3/5 pattern.</text>
</comment>
<comment type="mass spectrometry" mass="1656.6" method="Electrospray" evidence="3"/>
<comment type="miscellaneous">
    <text evidence="5">Found in injectable (milked) (IV) venom.</text>
</comment>
<comment type="similarity">
    <text evidence="4">Belongs to the conotoxin A superfamily.</text>
</comment>
<comment type="caution">
    <text evidence="4">The mature peptide could also result from natural deamidation of the Asn residue of CnIK (AC P56973).</text>
</comment>
<protein>
    <recommendedName>
        <fullName>Alpha-conotoxin CnIL</fullName>
    </recommendedName>
</protein>
<evidence type="ECO:0000250" key="1">
    <source>
        <dbReference type="UniProtKB" id="P01519"/>
    </source>
</evidence>
<evidence type="ECO:0000255" key="2"/>
<evidence type="ECO:0000269" key="3">
    <source>
    </source>
</evidence>
<evidence type="ECO:0000305" key="4"/>
<evidence type="ECO:0000305" key="5">
    <source>
    </source>
</evidence>